<accession>Q1CN80</accession>
<accession>C4GNE4</accession>
<dbReference type="EMBL" id="CP000305">
    <property type="protein sequence ID" value="ABG16550.1"/>
    <property type="molecule type" value="Genomic_DNA"/>
</dbReference>
<dbReference type="EMBL" id="ACNQ01000004">
    <property type="protein sequence ID" value="EEO78468.1"/>
    <property type="molecule type" value="Genomic_DNA"/>
</dbReference>
<dbReference type="RefSeq" id="WP_002210674.1">
    <property type="nucleotide sequence ID" value="NZ_ACNQ01000004.1"/>
</dbReference>
<dbReference type="GeneID" id="96663774"/>
<dbReference type="KEGG" id="ypn:YPN_0217"/>
<dbReference type="HOGENOM" id="CLU_092227_0_2_6"/>
<dbReference type="Proteomes" id="UP000008936">
    <property type="component" value="Chromosome"/>
</dbReference>
<dbReference type="GO" id="GO:0015934">
    <property type="term" value="C:large ribosomal subunit"/>
    <property type="evidence" value="ECO:0007669"/>
    <property type="project" value="InterPro"/>
</dbReference>
<dbReference type="GO" id="GO:0070180">
    <property type="term" value="F:large ribosomal subunit rRNA binding"/>
    <property type="evidence" value="ECO:0007669"/>
    <property type="project" value="UniProtKB-UniRule"/>
</dbReference>
<dbReference type="GO" id="GO:0003735">
    <property type="term" value="F:structural constituent of ribosome"/>
    <property type="evidence" value="ECO:0007669"/>
    <property type="project" value="InterPro"/>
</dbReference>
<dbReference type="GO" id="GO:0006412">
    <property type="term" value="P:translation"/>
    <property type="evidence" value="ECO:0007669"/>
    <property type="project" value="UniProtKB-UniRule"/>
</dbReference>
<dbReference type="CDD" id="cd05797">
    <property type="entry name" value="Ribosomal_L10"/>
    <property type="match status" value="1"/>
</dbReference>
<dbReference type="FunFam" id="3.30.70.1730:FF:000001">
    <property type="entry name" value="50S ribosomal protein L10"/>
    <property type="match status" value="1"/>
</dbReference>
<dbReference type="Gene3D" id="3.30.70.1730">
    <property type="match status" value="1"/>
</dbReference>
<dbReference type="Gene3D" id="6.10.250.2350">
    <property type="match status" value="1"/>
</dbReference>
<dbReference type="HAMAP" id="MF_00362">
    <property type="entry name" value="Ribosomal_uL10"/>
    <property type="match status" value="1"/>
</dbReference>
<dbReference type="InterPro" id="IPR001790">
    <property type="entry name" value="Ribosomal_uL10"/>
</dbReference>
<dbReference type="InterPro" id="IPR043141">
    <property type="entry name" value="Ribosomal_uL10-like_sf"/>
</dbReference>
<dbReference type="InterPro" id="IPR022973">
    <property type="entry name" value="Ribosomal_uL10_bac"/>
</dbReference>
<dbReference type="InterPro" id="IPR047865">
    <property type="entry name" value="Ribosomal_uL10_bac_type"/>
</dbReference>
<dbReference type="InterPro" id="IPR002363">
    <property type="entry name" value="Ribosomal_uL10_CS_bac"/>
</dbReference>
<dbReference type="NCBIfam" id="NF000955">
    <property type="entry name" value="PRK00099.1-1"/>
    <property type="match status" value="1"/>
</dbReference>
<dbReference type="PANTHER" id="PTHR11560">
    <property type="entry name" value="39S RIBOSOMAL PROTEIN L10, MITOCHONDRIAL"/>
    <property type="match status" value="1"/>
</dbReference>
<dbReference type="Pfam" id="PF00466">
    <property type="entry name" value="Ribosomal_L10"/>
    <property type="match status" value="1"/>
</dbReference>
<dbReference type="SUPFAM" id="SSF160369">
    <property type="entry name" value="Ribosomal protein L10-like"/>
    <property type="match status" value="1"/>
</dbReference>
<dbReference type="PROSITE" id="PS01109">
    <property type="entry name" value="RIBOSOMAL_L10"/>
    <property type="match status" value="1"/>
</dbReference>
<feature type="chain" id="PRO_1000005620" description="Large ribosomal subunit protein uL10">
    <location>
        <begin position="1"/>
        <end position="165"/>
    </location>
</feature>
<gene>
    <name evidence="1" type="primary">rplJ</name>
    <name type="ordered locus">YPN_0217</name>
    <name type="ORF">YP516_0194</name>
</gene>
<name>RL10_YERPN</name>
<protein>
    <recommendedName>
        <fullName evidence="1">Large ribosomal subunit protein uL10</fullName>
    </recommendedName>
    <alternativeName>
        <fullName evidence="2">50S ribosomal protein L10</fullName>
    </alternativeName>
</protein>
<sequence length="165" mass="17676">MALNLQGKQAIVAEVKEVAKGALSAVVADSRGVTVDKMTELRRAGREAGVHMQVVRNTLLRRIVEGTPFECLKDTFVGPTLIAFSAEHPGAAARLFKAFAKDNAKFEVKAAAFEGELIPAAQIDRLATLPTYEEAIARLMGTMKEAAAGKLVRTLAALRDQKEAA</sequence>
<keyword id="KW-0687">Ribonucleoprotein</keyword>
<keyword id="KW-0689">Ribosomal protein</keyword>
<keyword id="KW-0694">RNA-binding</keyword>
<keyword id="KW-0699">rRNA-binding</keyword>
<evidence type="ECO:0000255" key="1">
    <source>
        <dbReference type="HAMAP-Rule" id="MF_00362"/>
    </source>
</evidence>
<evidence type="ECO:0000305" key="2"/>
<comment type="function">
    <text evidence="1">Forms part of the ribosomal stalk, playing a central role in the interaction of the ribosome with GTP-bound translation factors.</text>
</comment>
<comment type="subunit">
    <text evidence="1">Part of the ribosomal stalk of the 50S ribosomal subunit. The N-terminus interacts with L11 and the large rRNA to form the base of the stalk. The C-terminus forms an elongated spine to which L12 dimers bind in a sequential fashion forming a multimeric L10(L12)X complex.</text>
</comment>
<comment type="similarity">
    <text evidence="1">Belongs to the universal ribosomal protein uL10 family.</text>
</comment>
<organism>
    <name type="scientific">Yersinia pestis bv. Antiqua (strain Nepal516)</name>
    <dbReference type="NCBI Taxonomy" id="377628"/>
    <lineage>
        <taxon>Bacteria</taxon>
        <taxon>Pseudomonadati</taxon>
        <taxon>Pseudomonadota</taxon>
        <taxon>Gammaproteobacteria</taxon>
        <taxon>Enterobacterales</taxon>
        <taxon>Yersiniaceae</taxon>
        <taxon>Yersinia</taxon>
    </lineage>
</organism>
<proteinExistence type="inferred from homology"/>
<reference key="1">
    <citation type="journal article" date="2006" name="J. Bacteriol.">
        <title>Complete genome sequence of Yersinia pestis strains Antiqua and Nepal516: evidence of gene reduction in an emerging pathogen.</title>
        <authorList>
            <person name="Chain P.S.G."/>
            <person name="Hu P."/>
            <person name="Malfatti S.A."/>
            <person name="Radnedge L."/>
            <person name="Larimer F."/>
            <person name="Vergez L.M."/>
            <person name="Worsham P."/>
            <person name="Chu M.C."/>
            <person name="Andersen G.L."/>
        </authorList>
    </citation>
    <scope>NUCLEOTIDE SEQUENCE [LARGE SCALE GENOMIC DNA]</scope>
    <source>
        <strain>Nepal516</strain>
    </source>
</reference>
<reference key="2">
    <citation type="submission" date="2009-04" db="EMBL/GenBank/DDBJ databases">
        <title>Yersinia pestis Nepal516A whole genome shotgun sequencing project.</title>
        <authorList>
            <person name="Plunkett G. III"/>
            <person name="Anderson B.D."/>
            <person name="Baumler D.J."/>
            <person name="Burland V."/>
            <person name="Cabot E.L."/>
            <person name="Glasner J.D."/>
            <person name="Mau B."/>
            <person name="Neeno-Eckwall E."/>
            <person name="Perna N.T."/>
            <person name="Munk A.C."/>
            <person name="Tapia R."/>
            <person name="Green L.D."/>
            <person name="Rogers Y.C."/>
            <person name="Detter J.C."/>
            <person name="Bruce D.C."/>
            <person name="Brettin T.S."/>
        </authorList>
    </citation>
    <scope>NUCLEOTIDE SEQUENCE [LARGE SCALE GENOMIC DNA]</scope>
    <source>
        <strain>Nepal516</strain>
    </source>
</reference>